<feature type="chain" id="PRO_0000388157" description="ATPase ASNA1 homolog">
    <location>
        <begin position="1"/>
        <end position="336"/>
    </location>
</feature>
<feature type="active site" evidence="1">
    <location>
        <position position="58"/>
    </location>
</feature>
<feature type="binding site" evidence="1">
    <location>
        <begin position="29"/>
        <end position="36"/>
    </location>
    <ligand>
        <name>ATP</name>
        <dbReference type="ChEBI" id="CHEBI:30616"/>
    </ligand>
</feature>
<feature type="binding site" evidence="1">
    <location>
        <position position="236"/>
    </location>
    <ligand>
        <name>ATP</name>
        <dbReference type="ChEBI" id="CHEBI:30616"/>
    </ligand>
</feature>
<feature type="binding site" evidence="1">
    <location>
        <position position="263"/>
    </location>
    <ligand>
        <name>ATP</name>
        <dbReference type="ChEBI" id="CHEBI:30616"/>
    </ligand>
</feature>
<feature type="binding site" evidence="1">
    <location>
        <position position="275"/>
    </location>
    <ligand>
        <name>Zn(2+)</name>
        <dbReference type="ChEBI" id="CHEBI:29105"/>
        <note>ligand shared between dimeric partners</note>
    </ligand>
</feature>
<feature type="binding site" evidence="1">
    <location>
        <position position="278"/>
    </location>
    <ligand>
        <name>Zn(2+)</name>
        <dbReference type="ChEBI" id="CHEBI:29105"/>
        <note>ligand shared between dimeric partners</note>
    </ligand>
</feature>
<sequence length="336" mass="37494">MVDNLPPLEPSLQNLVEQESLKWIFVGGKGGVGKTTCSSSLAVQLAKVRESVLIISTDPAHNISDAFDQKFTKVPTKVNGFDNLFAMEIDPNAGLSELPDEYFDGENEALRVSKGVMQEMINALPGIDEAMSYAEVMKLVKGMNFSVVVFDTAPTGHTLRLIAFPQVVEKGLGKLLRLKMKLAPLLTQFVSMLGMADVNADTLSQKLDDMLRVITQVNEQFKNPDQTTFVCVCIAEFFSLYETERLVQELTKCGIDVHNIIVNQLLFLGKSHNSCSMCASRYKIQEKYLDQIADLYEDFHVTKLPLLEKEVRGPESIKTFSENLMIPYKPKETAPM</sequence>
<keyword id="KW-0067">ATP-binding</keyword>
<keyword id="KW-0963">Cytoplasm</keyword>
<keyword id="KW-0256">Endoplasmic reticulum</keyword>
<keyword id="KW-0378">Hydrolase</keyword>
<keyword id="KW-0479">Metal-binding</keyword>
<keyword id="KW-0547">Nucleotide-binding</keyword>
<keyword id="KW-1185">Reference proteome</keyword>
<keyword id="KW-0813">Transport</keyword>
<keyword id="KW-0862">Zinc</keyword>
<gene>
    <name type="ORF">GJ21093</name>
</gene>
<organism>
    <name type="scientific">Drosophila virilis</name>
    <name type="common">Fruit fly</name>
    <dbReference type="NCBI Taxonomy" id="7244"/>
    <lineage>
        <taxon>Eukaryota</taxon>
        <taxon>Metazoa</taxon>
        <taxon>Ecdysozoa</taxon>
        <taxon>Arthropoda</taxon>
        <taxon>Hexapoda</taxon>
        <taxon>Insecta</taxon>
        <taxon>Pterygota</taxon>
        <taxon>Neoptera</taxon>
        <taxon>Endopterygota</taxon>
        <taxon>Diptera</taxon>
        <taxon>Brachycera</taxon>
        <taxon>Muscomorpha</taxon>
        <taxon>Ephydroidea</taxon>
        <taxon>Drosophilidae</taxon>
        <taxon>Drosophila</taxon>
    </lineage>
</organism>
<dbReference type="EC" id="3.6.-.-" evidence="1"/>
<dbReference type="EMBL" id="CH940648">
    <property type="protein sequence ID" value="EDW60037.1"/>
    <property type="molecule type" value="Genomic_DNA"/>
</dbReference>
<dbReference type="SMR" id="B4LN33"/>
<dbReference type="FunCoup" id="B4LN33">
    <property type="interactions" value="2043"/>
</dbReference>
<dbReference type="STRING" id="7244.B4LN33"/>
<dbReference type="EnsemblMetazoa" id="FBtr0237018">
    <property type="protein sequence ID" value="FBpp0235510"/>
    <property type="gene ID" value="FBgn0208227"/>
</dbReference>
<dbReference type="EnsemblMetazoa" id="XM_002048808.3">
    <property type="protein sequence ID" value="XP_002048844.1"/>
    <property type="gene ID" value="LOC6625694"/>
</dbReference>
<dbReference type="GeneID" id="6625694"/>
<dbReference type="KEGG" id="dvi:6625694"/>
<dbReference type="eggNOG" id="KOG2825">
    <property type="taxonomic scope" value="Eukaryota"/>
</dbReference>
<dbReference type="HOGENOM" id="CLU_040761_0_0_1"/>
<dbReference type="InParanoid" id="B4LN33"/>
<dbReference type="OMA" id="MDAPYEF"/>
<dbReference type="OrthoDB" id="1770at2759"/>
<dbReference type="PhylomeDB" id="B4LN33"/>
<dbReference type="Proteomes" id="UP000008792">
    <property type="component" value="Unassembled WGS sequence"/>
</dbReference>
<dbReference type="GO" id="GO:0043529">
    <property type="term" value="C:GET complex"/>
    <property type="evidence" value="ECO:0007669"/>
    <property type="project" value="TreeGrafter"/>
</dbReference>
<dbReference type="GO" id="GO:0005524">
    <property type="term" value="F:ATP binding"/>
    <property type="evidence" value="ECO:0007669"/>
    <property type="project" value="UniProtKB-UniRule"/>
</dbReference>
<dbReference type="GO" id="GO:0016887">
    <property type="term" value="F:ATP hydrolysis activity"/>
    <property type="evidence" value="ECO:0007669"/>
    <property type="project" value="InterPro"/>
</dbReference>
<dbReference type="GO" id="GO:0046872">
    <property type="term" value="F:metal ion binding"/>
    <property type="evidence" value="ECO:0007669"/>
    <property type="project" value="UniProtKB-KW"/>
</dbReference>
<dbReference type="GO" id="GO:0071816">
    <property type="term" value="P:tail-anchored membrane protein insertion into ER membrane"/>
    <property type="evidence" value="ECO:0007669"/>
    <property type="project" value="TreeGrafter"/>
</dbReference>
<dbReference type="CDD" id="cd02035">
    <property type="entry name" value="ArsA"/>
    <property type="match status" value="1"/>
</dbReference>
<dbReference type="FunFam" id="3.40.50.300:FF:000235">
    <property type="entry name" value="ATPase ASNA1"/>
    <property type="match status" value="1"/>
</dbReference>
<dbReference type="Gene3D" id="3.40.50.300">
    <property type="entry name" value="P-loop containing nucleotide triphosphate hydrolases"/>
    <property type="match status" value="1"/>
</dbReference>
<dbReference type="HAMAP" id="MF_03112">
    <property type="entry name" value="Asna1_Get3"/>
    <property type="match status" value="1"/>
</dbReference>
<dbReference type="InterPro" id="IPR025723">
    <property type="entry name" value="Anion-transp_ATPase-like_dom"/>
</dbReference>
<dbReference type="InterPro" id="IPR016300">
    <property type="entry name" value="ATPase_ArsA/GET3"/>
</dbReference>
<dbReference type="InterPro" id="IPR027542">
    <property type="entry name" value="ATPase_ArsA/GET3_euk"/>
</dbReference>
<dbReference type="InterPro" id="IPR027417">
    <property type="entry name" value="P-loop_NTPase"/>
</dbReference>
<dbReference type="NCBIfam" id="TIGR00345">
    <property type="entry name" value="GET3_arsA_TRC40"/>
    <property type="match status" value="1"/>
</dbReference>
<dbReference type="PANTHER" id="PTHR10803">
    <property type="entry name" value="ARSENICAL PUMP-DRIVING ATPASE ARSENITE-TRANSLOCATING ATPASE"/>
    <property type="match status" value="1"/>
</dbReference>
<dbReference type="PANTHER" id="PTHR10803:SF3">
    <property type="entry name" value="ATPASE GET3"/>
    <property type="match status" value="1"/>
</dbReference>
<dbReference type="Pfam" id="PF02374">
    <property type="entry name" value="ArsA_ATPase"/>
    <property type="match status" value="1"/>
</dbReference>
<dbReference type="SUPFAM" id="SSF52540">
    <property type="entry name" value="P-loop containing nucleoside triphosphate hydrolases"/>
    <property type="match status" value="1"/>
</dbReference>
<comment type="function">
    <text evidence="1">ATPase required for the post-translational delivery of tail-anchored (TA) proteins to the endoplasmic reticulum. Recognizes and selectively binds the transmembrane domain of TA proteins in the cytosol. This complex then targets to the endoplasmic reticulum by membrane-bound receptors, where the tail-anchored protein is released for insertion. This process is regulated by ATP binding and hydrolysis. ATP binding drives the homodimer towards the closed dimer state, facilitating recognition of newly synthesized TA membrane proteins. ATP hydrolysis is required for insertion. Subsequently, the homodimer reverts towards the open dimer state, lowering its affinity for the membrane-bound receptor, and returning it to the cytosol to initiate a new round of targeting.</text>
</comment>
<comment type="subunit">
    <text evidence="1">Homodimer.</text>
</comment>
<comment type="subcellular location">
    <subcellularLocation>
        <location evidence="1">Cytoplasm</location>
    </subcellularLocation>
    <subcellularLocation>
        <location evidence="1">Endoplasmic reticulum</location>
    </subcellularLocation>
</comment>
<comment type="similarity">
    <text evidence="1">Belongs to the arsA ATPase family.</text>
</comment>
<evidence type="ECO:0000255" key="1">
    <source>
        <dbReference type="HAMAP-Rule" id="MF_03112"/>
    </source>
</evidence>
<reference key="1">
    <citation type="journal article" date="2007" name="Nature">
        <title>Evolution of genes and genomes on the Drosophila phylogeny.</title>
        <authorList>
            <consortium name="Drosophila 12 genomes consortium"/>
        </authorList>
    </citation>
    <scope>NUCLEOTIDE SEQUENCE [LARGE SCALE GENOMIC DNA]</scope>
    <source>
        <strain>Tucson 15010-1051.87</strain>
    </source>
</reference>
<protein>
    <recommendedName>
        <fullName evidence="1">ATPase ASNA1 homolog</fullName>
        <ecNumber evidence="1">3.6.-.-</ecNumber>
    </recommendedName>
    <alternativeName>
        <fullName evidence="1">Arsenical pump-driving ATPase homolog</fullName>
    </alternativeName>
    <alternativeName>
        <fullName evidence="1">Arsenite-stimulated ATPase</fullName>
    </alternativeName>
</protein>
<name>ASNA_DROVI</name>
<accession>B4LN33</accession>
<proteinExistence type="inferred from homology"/>